<name>RIMP_OLEA2</name>
<dbReference type="EMBL" id="CP000112">
    <property type="protein sequence ID" value="ABB39954.2"/>
    <property type="molecule type" value="Genomic_DNA"/>
</dbReference>
<dbReference type="RefSeq" id="WP_011368908.1">
    <property type="nucleotide sequence ID" value="NC_007519.1"/>
</dbReference>
<dbReference type="SMR" id="Q30WJ2"/>
<dbReference type="STRING" id="207559.Dde_3160"/>
<dbReference type="KEGG" id="dde:Dde_3160"/>
<dbReference type="eggNOG" id="COG0779">
    <property type="taxonomic scope" value="Bacteria"/>
</dbReference>
<dbReference type="HOGENOM" id="CLU_070525_1_1_7"/>
<dbReference type="Proteomes" id="UP000002710">
    <property type="component" value="Chromosome"/>
</dbReference>
<dbReference type="GO" id="GO:0005829">
    <property type="term" value="C:cytosol"/>
    <property type="evidence" value="ECO:0007669"/>
    <property type="project" value="TreeGrafter"/>
</dbReference>
<dbReference type="GO" id="GO:0000028">
    <property type="term" value="P:ribosomal small subunit assembly"/>
    <property type="evidence" value="ECO:0007669"/>
    <property type="project" value="TreeGrafter"/>
</dbReference>
<dbReference type="GO" id="GO:0006412">
    <property type="term" value="P:translation"/>
    <property type="evidence" value="ECO:0007669"/>
    <property type="project" value="TreeGrafter"/>
</dbReference>
<dbReference type="CDD" id="cd01734">
    <property type="entry name" value="YlxS_C"/>
    <property type="match status" value="1"/>
</dbReference>
<dbReference type="FunFam" id="3.30.300.70:FF:000001">
    <property type="entry name" value="Ribosome maturation factor RimP"/>
    <property type="match status" value="1"/>
</dbReference>
<dbReference type="Gene3D" id="3.30.300.70">
    <property type="entry name" value="RimP-like superfamily, N-terminal"/>
    <property type="match status" value="1"/>
</dbReference>
<dbReference type="HAMAP" id="MF_01077">
    <property type="entry name" value="RimP"/>
    <property type="match status" value="1"/>
</dbReference>
<dbReference type="InterPro" id="IPR003728">
    <property type="entry name" value="Ribosome_maturation_RimP"/>
</dbReference>
<dbReference type="InterPro" id="IPR028998">
    <property type="entry name" value="RimP_C"/>
</dbReference>
<dbReference type="InterPro" id="IPR036847">
    <property type="entry name" value="RimP_C_sf"/>
</dbReference>
<dbReference type="InterPro" id="IPR028989">
    <property type="entry name" value="RimP_N"/>
</dbReference>
<dbReference type="InterPro" id="IPR035956">
    <property type="entry name" value="RimP_N_sf"/>
</dbReference>
<dbReference type="PANTHER" id="PTHR33867">
    <property type="entry name" value="RIBOSOME MATURATION FACTOR RIMP"/>
    <property type="match status" value="1"/>
</dbReference>
<dbReference type="PANTHER" id="PTHR33867:SF1">
    <property type="entry name" value="RIBOSOME MATURATION FACTOR RIMP"/>
    <property type="match status" value="1"/>
</dbReference>
<dbReference type="Pfam" id="PF17384">
    <property type="entry name" value="DUF150_C"/>
    <property type="match status" value="1"/>
</dbReference>
<dbReference type="Pfam" id="PF02576">
    <property type="entry name" value="RimP_N"/>
    <property type="match status" value="1"/>
</dbReference>
<dbReference type="SUPFAM" id="SSF74942">
    <property type="entry name" value="YhbC-like, C-terminal domain"/>
    <property type="match status" value="1"/>
</dbReference>
<dbReference type="SUPFAM" id="SSF75420">
    <property type="entry name" value="YhbC-like, N-terminal domain"/>
    <property type="match status" value="1"/>
</dbReference>
<keyword id="KW-0963">Cytoplasm</keyword>
<keyword id="KW-1185">Reference proteome</keyword>
<keyword id="KW-0690">Ribosome biogenesis</keyword>
<protein>
    <recommendedName>
        <fullName evidence="1">Ribosome maturation factor RimP</fullName>
    </recommendedName>
</protein>
<organism>
    <name type="scientific">Oleidesulfovibrio alaskensis (strain ATCC BAA-1058 / DSM 17464 / G20)</name>
    <name type="common">Desulfovibrio alaskensis</name>
    <dbReference type="NCBI Taxonomy" id="207559"/>
    <lineage>
        <taxon>Bacteria</taxon>
        <taxon>Pseudomonadati</taxon>
        <taxon>Thermodesulfobacteriota</taxon>
        <taxon>Desulfovibrionia</taxon>
        <taxon>Desulfovibrionales</taxon>
        <taxon>Desulfovibrionaceae</taxon>
        <taxon>Oleidesulfovibrio</taxon>
    </lineage>
</organism>
<proteinExistence type="inferred from homology"/>
<comment type="function">
    <text evidence="1">Required for maturation of 30S ribosomal subunits.</text>
</comment>
<comment type="subcellular location">
    <subcellularLocation>
        <location evidence="1">Cytoplasm</location>
    </subcellularLocation>
</comment>
<comment type="similarity">
    <text evidence="1">Belongs to the RimP family.</text>
</comment>
<feature type="chain" id="PRO_0000229236" description="Ribosome maturation factor RimP">
    <location>
        <begin position="1"/>
        <end position="171"/>
    </location>
</feature>
<sequence>MTVTTIHEQLLEIITPVIRSFDLELWGMDFIQGGKAVLRIYIDGPDGVTIDQCATVSRHIGLALEVEDIIAGAYNLEVSSPGLERPLFSAAQLAAYKGHKAELVLRAPCAQFPGRKKFTGVVGNVEGENFTLQIDPLKGGDNLQEELSAHWDDVKKARLIYDFDSEKGQKR</sequence>
<accession>Q30WJ2</accession>
<reference key="1">
    <citation type="journal article" date="2011" name="J. Bacteriol.">
        <title>Complete genome sequence and updated annotation of Desulfovibrio alaskensis G20.</title>
        <authorList>
            <person name="Hauser L.J."/>
            <person name="Land M.L."/>
            <person name="Brown S.D."/>
            <person name="Larimer F."/>
            <person name="Keller K.L."/>
            <person name="Rapp-Giles B.J."/>
            <person name="Price M.N."/>
            <person name="Lin M."/>
            <person name="Bruce D.C."/>
            <person name="Detter J.C."/>
            <person name="Tapia R."/>
            <person name="Han C.S."/>
            <person name="Goodwin L.A."/>
            <person name="Cheng J.F."/>
            <person name="Pitluck S."/>
            <person name="Copeland A."/>
            <person name="Lucas S."/>
            <person name="Nolan M."/>
            <person name="Lapidus A.L."/>
            <person name="Palumbo A.V."/>
            <person name="Wall J.D."/>
        </authorList>
    </citation>
    <scope>NUCLEOTIDE SEQUENCE [LARGE SCALE GENOMIC DNA]</scope>
    <source>
        <strain>ATCC BAA-1058 / DSM 17464 / G20</strain>
    </source>
</reference>
<gene>
    <name evidence="1" type="primary">rimP</name>
    <name type="ordered locus">Dde_3160</name>
</gene>
<evidence type="ECO:0000255" key="1">
    <source>
        <dbReference type="HAMAP-Rule" id="MF_01077"/>
    </source>
</evidence>